<organism>
    <name type="scientific">Rattus norvegicus</name>
    <name type="common">Rat</name>
    <dbReference type="NCBI Taxonomy" id="10116"/>
    <lineage>
        <taxon>Eukaryota</taxon>
        <taxon>Metazoa</taxon>
        <taxon>Chordata</taxon>
        <taxon>Craniata</taxon>
        <taxon>Vertebrata</taxon>
        <taxon>Euteleostomi</taxon>
        <taxon>Mammalia</taxon>
        <taxon>Eutheria</taxon>
        <taxon>Euarchontoglires</taxon>
        <taxon>Glires</taxon>
        <taxon>Rodentia</taxon>
        <taxon>Myomorpha</taxon>
        <taxon>Muroidea</taxon>
        <taxon>Muridae</taxon>
        <taxon>Murinae</taxon>
        <taxon>Rattus</taxon>
    </lineage>
</organism>
<keyword id="KW-0007">Acetylation</keyword>
<keyword id="KW-0067">ATP-binding</keyword>
<keyword id="KW-0143">Chaperone</keyword>
<keyword id="KW-0963">Cytoplasm</keyword>
<keyword id="KW-0206">Cytoskeleton</keyword>
<keyword id="KW-0488">Methylation</keyword>
<keyword id="KW-0547">Nucleotide-binding</keyword>
<keyword id="KW-0539">Nucleus</keyword>
<keyword id="KW-0597">Phosphoprotein</keyword>
<keyword id="KW-1185">Reference proteome</keyword>
<keyword id="KW-0964">Secreted</keyword>
<keyword id="KW-0346">Stress response</keyword>
<proteinExistence type="evidence at protein level"/>
<name>HS71A_RAT</name>
<gene>
    <name type="primary">Hspa1a</name>
    <name type="synonym">Hsp70-1</name>
    <name type="synonym">Hspa1</name>
</gene>
<feature type="initiator methionine" description="Removed" evidence="2">
    <location>
        <position position="1"/>
    </location>
</feature>
<feature type="chain" id="PRO_0000078254" description="Heat shock 70 kDa protein 1A">
    <location>
        <begin position="2"/>
        <end position="641"/>
    </location>
</feature>
<feature type="region of interest" description="Nucleotide-binding domain (NBD)" evidence="3">
    <location>
        <begin position="2"/>
        <end position="386"/>
    </location>
</feature>
<feature type="region of interest" description="Substrate-binding domain (SBD)" evidence="3">
    <location>
        <begin position="394"/>
        <end position="509"/>
    </location>
</feature>
<feature type="region of interest" description="Disordered" evidence="5">
    <location>
        <begin position="618"/>
        <end position="641"/>
    </location>
</feature>
<feature type="compositionally biased region" description="Gly residues" evidence="5">
    <location>
        <begin position="618"/>
        <end position="633"/>
    </location>
</feature>
<feature type="binding site" evidence="1">
    <location>
        <begin position="12"/>
        <end position="15"/>
    </location>
    <ligand>
        <name>ATP</name>
        <dbReference type="ChEBI" id="CHEBI:30616"/>
    </ligand>
</feature>
<feature type="binding site" evidence="1">
    <location>
        <position position="71"/>
    </location>
    <ligand>
        <name>ATP</name>
        <dbReference type="ChEBI" id="CHEBI:30616"/>
    </ligand>
</feature>
<feature type="binding site" evidence="1">
    <location>
        <begin position="202"/>
        <end position="204"/>
    </location>
    <ligand>
        <name>ATP</name>
        <dbReference type="ChEBI" id="CHEBI:30616"/>
    </ligand>
</feature>
<feature type="binding site" evidence="1">
    <location>
        <begin position="268"/>
        <end position="275"/>
    </location>
    <ligand>
        <name>ATP</name>
        <dbReference type="ChEBI" id="CHEBI:30616"/>
    </ligand>
</feature>
<feature type="binding site" evidence="1">
    <location>
        <begin position="339"/>
        <end position="342"/>
    </location>
    <ligand>
        <name>ATP</name>
        <dbReference type="ChEBI" id="CHEBI:30616"/>
    </ligand>
</feature>
<feature type="modified residue" description="N-acetylalanine" evidence="2">
    <location>
        <position position="2"/>
    </location>
</feature>
<feature type="modified residue" description="N6-acetyllysine" evidence="2">
    <location>
        <position position="77"/>
    </location>
</feature>
<feature type="modified residue" description="N6-acetyllysine" evidence="2">
    <location>
        <position position="108"/>
    </location>
</feature>
<feature type="modified residue" description="N6-acetyllysine" evidence="2">
    <location>
        <position position="246"/>
    </location>
</feature>
<feature type="modified residue" description="N6-acetyllysine" evidence="2">
    <location>
        <position position="348"/>
    </location>
</feature>
<feature type="modified residue" description="Omega-N-methylarginine" evidence="2">
    <location>
        <position position="469"/>
    </location>
</feature>
<feature type="modified residue" description="N6,N6,N6-trimethyllysine; by METTL21A; alternate" evidence="2">
    <location>
        <position position="561"/>
    </location>
</feature>
<feature type="modified residue" description="N6,N6-dimethyllysine; alternate" evidence="2">
    <location>
        <position position="561"/>
    </location>
</feature>
<feature type="modified residue" description="Phosphoserine" evidence="2">
    <location>
        <position position="631"/>
    </location>
</feature>
<feature type="modified residue" description="Phosphoserine" evidence="2">
    <location>
        <position position="633"/>
    </location>
</feature>
<feature type="modified residue" description="Phosphothreonine" evidence="2">
    <location>
        <position position="636"/>
    </location>
</feature>
<evidence type="ECO:0000250" key="1"/>
<evidence type="ECO:0000250" key="2">
    <source>
        <dbReference type="UniProtKB" id="P0DMV8"/>
    </source>
</evidence>
<evidence type="ECO:0000250" key="3">
    <source>
        <dbReference type="UniProtKB" id="P11142"/>
    </source>
</evidence>
<evidence type="ECO:0000250" key="4">
    <source>
        <dbReference type="UniProtKB" id="Q61696"/>
    </source>
</evidence>
<evidence type="ECO:0000256" key="5">
    <source>
        <dbReference type="SAM" id="MobiDB-lite"/>
    </source>
</evidence>
<evidence type="ECO:0000269" key="6">
    <source>
    </source>
</evidence>
<evidence type="ECO:0000269" key="7">
    <source>
    </source>
</evidence>
<evidence type="ECO:0000269" key="8">
    <source>
    </source>
</evidence>
<evidence type="ECO:0000305" key="9"/>
<comment type="function">
    <text evidence="2 8">Molecular chaperone implicated in a wide variety of cellular processes, including protection of the proteome from stress, folding and transport of newly synthesized polypeptides, activation of proteolysis of misfolded proteins and the formation and dissociation of protein complexes. Plays a pivotal role in the protein quality control system, ensuring the correct folding of proteins, the re-folding of misfolded proteins and controlling the targeting of proteins for subsequent degradation. This is achieved through cycles of ATP binding, ATP hydrolysis and ADP release, mediated by co-chaperones. The co-chaperones have been shown to not only regulate different steps of the ATPase cycle, but they also have an individual specificity such that one co-chaperone may promote folding of a substrate while another may promote degradation. The affinity for polypeptides is regulated by its nucleotide bound state. In the ATP-bound form, it has a low affinity for substrate proteins. However, upon hydrolysis of the ATP to ADP, it undergoes a conformational change that increases its affinity for substrate proteins. It goes through repeated cycles of ATP hydrolysis and nucleotide exchange, which permits cycles of substrate binding and release. The co-chaperones are of three types: J-domain co-chaperones such as HSP40s (stimulate ATPase hydrolysis by HSP70), the nucleotide exchange factors (NEF) such as BAG1/2/3 (facilitate conversion of HSP70 from the ADP-bound to the ATP-bound state thereby promoting substrate release), and the TPR domain chaperones such as HOPX and STUB1. Maintains protein homeostasis during cellular stress through two opposing mechanisms: protein refolding and degradation. Its acetylation/deacetylation state determines whether it functions in protein refolding or protein degradation by controlling the competitive binding of co-chaperones HOPX and STUB1. During the early stress response, the acetylated form binds to HOPX which assists in chaperone-mediated protein refolding, thereafter, it is deacetylated and binds to ubiquitin ligase STUB1 that promotes ubiquitin-mediated protein degradation. Regulates centrosome integrity during mitosis, and is required for the maintenance of a functional mitotic centrosome that supports the assembly of a bipolar mitotic spindle. Enhances STUB1-mediated SMAD3 ubiquitination and degradation and facilitates STUB1-mediated inhibition of TGF-beta signaling. Essential for STUB1-mediated ubiquitination and degradation of FOXP3 in regulatory T-cells (Treg) during inflammation. Required as a co-chaperone for optimal STUB1/CHIP ubiquitination of NFATC3 (PubMed:30980393). Negatively regulates heat shock-induced HSF1 transcriptional activity during the attenuation and recovery phase period of the heat shock response.</text>
</comment>
<comment type="subunit">
    <text evidence="2 4 6">Component of the CatSper complex. Identified in a IGF2BP1-dependent mRNP granule complex containing untranslated mRNAs. Interacts with CHCHD3, DNAJC7, IRAK1BP1, PPP5C and TSC2. Interacts with TERT; the interaction occurs in the absence of the RNA component, TERC, and dissociates once the TERT complex has formed. Interacts with METTL21A. Interacts with DNAAF2. Interacts with TRIM5 (via B30.2/SPRY domain). Interacts with PRKN. Interacts with FOXP3. Interacts with NOD2; the interaction enhances NOD2 stability. Interacts with DNAJC9 (via J domain). Interacts with ATF5; the interaction protects ATF5 from degradation via proteasome-dependent and caspase-dependent processes. Interacts with RNF207 (via the C-terminus); this interaction additively increases KCNH2 expression. Interacts with HSF1 (via transactivation domain); this interaction results in the inhibition of heat shock- and HSF1-induced transcriptional activity during the attenuation and recovery phase period of the heat shock response. Interacts with NAA10, HSP40, HSP90 and HDAC4. Interacts (via C-terminus) with STUB1 (via TPR repeats) (PubMed:19237536). The acetylated form and the non-acetylated form interact with HOPX and STUB1 respectively. Interacts with NEDD1 and SMAD3. Interacts (via NBD) with BAG1, BAG2, BAG3 and HSPH1/HSP105. Interacts with DNAJC8. Interacts with NLRP12. Interacts with PGLYRP. Forms a ternary complex with BAG3 and HSPB8 (By similarity).</text>
</comment>
<comment type="subcellular location">
    <subcellularLocation>
        <location evidence="2">Cytoplasm</location>
    </subcellularLocation>
    <subcellularLocation>
        <location evidence="2">Nucleus</location>
    </subcellularLocation>
    <subcellularLocation>
        <location evidence="2">Cytoplasm</location>
        <location evidence="2">Cytoskeleton</location>
        <location evidence="2">Microtubule organizing center</location>
        <location evidence="2">Centrosome</location>
    </subcellularLocation>
    <subcellularLocation>
        <location evidence="4">Secreted</location>
    </subcellularLocation>
    <text evidence="2">Localized in cytoplasmic mRNP granules containing untranslated mRNAs.</text>
</comment>
<comment type="developmental stage">
    <text evidence="7">Expressed in neurons at 18.5 dpc (at protein level).</text>
</comment>
<comment type="induction">
    <text evidence="7">Induced by oxygen and glucose deprivation in neuronal cells.</text>
</comment>
<comment type="domain">
    <text evidence="2">The N-terminal nucleotide binding domain (NBD) (also known as the ATPase domain) is responsible for binding and hydrolyzing ATP. The C-terminal substrate-binding domain (SBD) (also known as peptide-binding domain) binds to the client/substrate proteins. The two domains are allosterically coupled so that, when ATP is bound to the NBD, the SBD binds relatively weakly to clients. When ADP is bound in the NBD, a conformational change enhances the affinity of the SBD for client proteins.</text>
</comment>
<comment type="PTM">
    <text evidence="2">In response to cellular stress, acetylated at Lys-77 by NA110 and then gradually deacetylated by HDAC4 at later stages. Acetylation enhances its chaperone activity and also determines whether it will function as a chaperone for protein refolding or degradation by controlling its binding to co-chaperones HOPX and STUB1. The acetylated form and the non-acetylated form bind to HOPX and STUB1 respectively. Acetylation also protects cells against various types of cellular stress.</text>
</comment>
<comment type="similarity">
    <text evidence="9">Belongs to the heat shock protein 70 family.</text>
</comment>
<accession>P0DMW0</accession>
<accession>P42853</accession>
<accession>Q07439</accession>
<accession>Q63256</accession>
<dbReference type="EMBL" id="X77208">
    <property type="protein sequence ID" value="CAA54423.1"/>
    <property type="molecule type" value="Genomic_DNA"/>
</dbReference>
<dbReference type="EMBL" id="BX883045">
    <property type="protein sequence ID" value="CAE83978.1"/>
    <property type="molecule type" value="Genomic_DNA"/>
</dbReference>
<dbReference type="PIR" id="I54542">
    <property type="entry name" value="I54542"/>
</dbReference>
<dbReference type="RefSeq" id="NP_001316825.1">
    <property type="nucleotide sequence ID" value="NM_001329896.1"/>
</dbReference>
<dbReference type="RefSeq" id="NP_114177.2">
    <property type="nucleotide sequence ID" value="NM_031971.2"/>
</dbReference>
<dbReference type="RefSeq" id="NP_997669.1">
    <property type="nucleotide sequence ID" value="NM_212504.1"/>
</dbReference>
<dbReference type="RefSeq" id="XP_017457331.1">
    <property type="nucleotide sequence ID" value="XM_017601842.1"/>
</dbReference>
<dbReference type="SMR" id="P0DMW0"/>
<dbReference type="FunCoup" id="P0DMW0">
    <property type="interactions" value="2418"/>
</dbReference>
<dbReference type="STRING" id="10116.ENSRNOP00000067749"/>
<dbReference type="CarbonylDB" id="P0DMW0"/>
<dbReference type="GlyGen" id="P0DMW0">
    <property type="glycosylation" value="2 sites, 1 O-linked glycan (1 site)"/>
</dbReference>
<dbReference type="iPTMnet" id="P0DMW0"/>
<dbReference type="PhosphoSitePlus" id="P0DMW0"/>
<dbReference type="jPOST" id="P0DMW0"/>
<dbReference type="PaxDb" id="10116-ENSRNOP00000050605"/>
<dbReference type="DNASU" id="24472"/>
<dbReference type="GeneID" id="108348108"/>
<dbReference type="GeneID" id="24472"/>
<dbReference type="KEGG" id="rno:108348108"/>
<dbReference type="KEGG" id="rno:24472"/>
<dbReference type="AGR" id="RGD:2840"/>
<dbReference type="CTD" id="3303"/>
<dbReference type="CTD" id="3304"/>
<dbReference type="RGD" id="2840">
    <property type="gene designation" value="Hspa1a"/>
</dbReference>
<dbReference type="VEuPathDB" id="HostDB:ENSRNOG00000045654"/>
<dbReference type="VEuPathDB" id="HostDB:ENSRNOG00000050647"/>
<dbReference type="eggNOG" id="KOG0101">
    <property type="taxonomic scope" value="Eukaryota"/>
</dbReference>
<dbReference type="InParanoid" id="P0DMW0"/>
<dbReference type="OrthoDB" id="50143at9989"/>
<dbReference type="PhylomeDB" id="P0DMW0"/>
<dbReference type="Reactome" id="R-RNO-3371453">
    <property type="pathway name" value="Regulation of HSF1-mediated heat shock response"/>
</dbReference>
<dbReference type="Reactome" id="R-RNO-3371497">
    <property type="pathway name" value="HSP90 chaperone cycle for steroid hormone receptors (SHR) in the presence of ligand"/>
</dbReference>
<dbReference type="Reactome" id="R-RNO-3371568">
    <property type="pathway name" value="Attenuation phase"/>
</dbReference>
<dbReference type="Reactome" id="R-RNO-3371571">
    <property type="pathway name" value="HSF1-dependent transactivation"/>
</dbReference>
<dbReference type="Reactome" id="R-RNO-450408">
    <property type="pathway name" value="AUF1 (hnRNP D0) binds and destabilizes mRNA"/>
</dbReference>
<dbReference type="Reactome" id="R-RNO-6798695">
    <property type="pathway name" value="Neutrophil degranulation"/>
</dbReference>
<dbReference type="Reactome" id="R-RNO-9833482">
    <property type="pathway name" value="PKR-mediated signaling"/>
</dbReference>
<dbReference type="Reactome" id="R-RNO-9841251">
    <property type="pathway name" value="Mitochondrial unfolded protein response (UPRmt)"/>
</dbReference>
<dbReference type="PRO" id="PR:P0DMW0"/>
<dbReference type="Proteomes" id="UP000002494">
    <property type="component" value="Chromosome 20"/>
</dbReference>
<dbReference type="Bgee" id="ENSRNOG00000045654">
    <property type="expression patterns" value="Expressed in esophagus and 17 other cell types or tissues"/>
</dbReference>
<dbReference type="ExpressionAtlas" id="P0DMW0">
    <property type="expression patterns" value="baseline and differential"/>
</dbReference>
<dbReference type="GO" id="GO:0016235">
    <property type="term" value="C:aggresome"/>
    <property type="evidence" value="ECO:0000266"/>
    <property type="project" value="RGD"/>
</dbReference>
<dbReference type="GO" id="GO:0016324">
    <property type="term" value="C:apical plasma membrane"/>
    <property type="evidence" value="ECO:0000314"/>
    <property type="project" value="RGD"/>
</dbReference>
<dbReference type="GO" id="GO:0016323">
    <property type="term" value="C:basolateral plasma membrane"/>
    <property type="evidence" value="ECO:0000314"/>
    <property type="project" value="RGD"/>
</dbReference>
<dbReference type="GO" id="GO:0044297">
    <property type="term" value="C:cell body"/>
    <property type="evidence" value="ECO:0000266"/>
    <property type="project" value="RGD"/>
</dbReference>
<dbReference type="GO" id="GO:0005814">
    <property type="term" value="C:centriole"/>
    <property type="evidence" value="ECO:0000266"/>
    <property type="project" value="RGD"/>
</dbReference>
<dbReference type="GO" id="GO:0005813">
    <property type="term" value="C:centrosome"/>
    <property type="evidence" value="ECO:0000250"/>
    <property type="project" value="UniProtKB"/>
</dbReference>
<dbReference type="GO" id="GO:0008180">
    <property type="term" value="C:COP9 signalosome"/>
    <property type="evidence" value="ECO:0000266"/>
    <property type="project" value="RGD"/>
</dbReference>
<dbReference type="GO" id="GO:0005737">
    <property type="term" value="C:cytoplasm"/>
    <property type="evidence" value="ECO:0000250"/>
    <property type="project" value="UniProtKB"/>
</dbReference>
<dbReference type="GO" id="GO:0005829">
    <property type="term" value="C:cytosol"/>
    <property type="evidence" value="ECO:0000266"/>
    <property type="project" value="RGD"/>
</dbReference>
<dbReference type="GO" id="GO:0005615">
    <property type="term" value="C:extracellular space"/>
    <property type="evidence" value="ECO:0000266"/>
    <property type="project" value="RGD"/>
</dbReference>
<dbReference type="GO" id="GO:0016234">
    <property type="term" value="C:inclusion body"/>
    <property type="evidence" value="ECO:0000266"/>
    <property type="project" value="RGD"/>
</dbReference>
<dbReference type="GO" id="GO:0045121">
    <property type="term" value="C:membrane raft"/>
    <property type="evidence" value="ECO:0000314"/>
    <property type="project" value="CAFA"/>
</dbReference>
<dbReference type="GO" id="GO:0005739">
    <property type="term" value="C:mitochondrion"/>
    <property type="evidence" value="ECO:0000266"/>
    <property type="project" value="RGD"/>
</dbReference>
<dbReference type="GO" id="GO:0016607">
    <property type="term" value="C:nuclear speck"/>
    <property type="evidence" value="ECO:0000250"/>
    <property type="project" value="UniProtKB"/>
</dbReference>
<dbReference type="GO" id="GO:0005634">
    <property type="term" value="C:nucleus"/>
    <property type="evidence" value="ECO:0000250"/>
    <property type="project" value="UniProtKB"/>
</dbReference>
<dbReference type="GO" id="GO:0048471">
    <property type="term" value="C:perinuclear region of cytoplasm"/>
    <property type="evidence" value="ECO:0000250"/>
    <property type="project" value="UniProtKB"/>
</dbReference>
<dbReference type="GO" id="GO:0005886">
    <property type="term" value="C:plasma membrane"/>
    <property type="evidence" value="ECO:0000318"/>
    <property type="project" value="GO_Central"/>
</dbReference>
<dbReference type="GO" id="GO:0032991">
    <property type="term" value="C:protein-containing complex"/>
    <property type="evidence" value="ECO:0000314"/>
    <property type="project" value="RGD"/>
</dbReference>
<dbReference type="GO" id="GO:1990904">
    <property type="term" value="C:ribonucleoprotein complex"/>
    <property type="evidence" value="ECO:0000266"/>
    <property type="project" value="RGD"/>
</dbReference>
<dbReference type="GO" id="GO:0002199">
    <property type="term" value="C:zona pellucida receptor complex"/>
    <property type="evidence" value="ECO:0000266"/>
    <property type="project" value="RGD"/>
</dbReference>
<dbReference type="GO" id="GO:0005524">
    <property type="term" value="F:ATP binding"/>
    <property type="evidence" value="ECO:0000266"/>
    <property type="project" value="RGD"/>
</dbReference>
<dbReference type="GO" id="GO:0016887">
    <property type="term" value="F:ATP hydrolysis activity"/>
    <property type="evidence" value="ECO:0000266"/>
    <property type="project" value="RGD"/>
</dbReference>
<dbReference type="GO" id="GO:0140545">
    <property type="term" value="F:ATP-dependent protein disaggregase activity"/>
    <property type="evidence" value="ECO:0000266"/>
    <property type="project" value="RGD"/>
</dbReference>
<dbReference type="GO" id="GO:0140662">
    <property type="term" value="F:ATP-dependent protein folding chaperone"/>
    <property type="evidence" value="ECO:0007669"/>
    <property type="project" value="InterPro"/>
</dbReference>
<dbReference type="GO" id="GO:0055131">
    <property type="term" value="F:C3HC4-type RING finger domain binding"/>
    <property type="evidence" value="ECO:0000266"/>
    <property type="project" value="RGD"/>
</dbReference>
<dbReference type="GO" id="GO:0038177">
    <property type="term" value="F:death receptor agonist activity"/>
    <property type="evidence" value="ECO:0000266"/>
    <property type="project" value="RGD"/>
</dbReference>
<dbReference type="GO" id="GO:0031249">
    <property type="term" value="F:denatured protein binding"/>
    <property type="evidence" value="ECO:0000266"/>
    <property type="project" value="RGD"/>
</dbReference>
<dbReference type="GO" id="GO:0097718">
    <property type="term" value="F:disordered domain specific binding"/>
    <property type="evidence" value="ECO:0000266"/>
    <property type="project" value="RGD"/>
</dbReference>
<dbReference type="GO" id="GO:0019899">
    <property type="term" value="F:enzyme binding"/>
    <property type="evidence" value="ECO:0000266"/>
    <property type="project" value="RGD"/>
</dbReference>
<dbReference type="GO" id="GO:0001664">
    <property type="term" value="F:G protein-coupled receptor binding"/>
    <property type="evidence" value="ECO:0000266"/>
    <property type="project" value="RGD"/>
</dbReference>
<dbReference type="GO" id="GO:0031072">
    <property type="term" value="F:heat shock protein binding"/>
    <property type="evidence" value="ECO:0000266"/>
    <property type="project" value="RGD"/>
</dbReference>
<dbReference type="GO" id="GO:0042826">
    <property type="term" value="F:histone deacetylase binding"/>
    <property type="evidence" value="ECO:0000266"/>
    <property type="project" value="RGD"/>
</dbReference>
<dbReference type="GO" id="GO:0051787">
    <property type="term" value="F:misfolded protein binding"/>
    <property type="evidence" value="ECO:0000266"/>
    <property type="project" value="RGD"/>
</dbReference>
<dbReference type="GO" id="GO:0051059">
    <property type="term" value="F:NF-kappaB binding"/>
    <property type="evidence" value="ECO:0000353"/>
    <property type="project" value="RGD"/>
</dbReference>
<dbReference type="GO" id="GO:0002020">
    <property type="term" value="F:protease binding"/>
    <property type="evidence" value="ECO:0000353"/>
    <property type="project" value="RGD"/>
</dbReference>
<dbReference type="GO" id="GO:0044183">
    <property type="term" value="F:protein folding chaperone"/>
    <property type="evidence" value="ECO:0000266"/>
    <property type="project" value="RGD"/>
</dbReference>
<dbReference type="GO" id="GO:0048018">
    <property type="term" value="F:receptor ligand activity"/>
    <property type="evidence" value="ECO:0000266"/>
    <property type="project" value="RGD"/>
</dbReference>
<dbReference type="GO" id="GO:0005102">
    <property type="term" value="F:signaling receptor binding"/>
    <property type="evidence" value="ECO:0000266"/>
    <property type="project" value="RGD"/>
</dbReference>
<dbReference type="GO" id="GO:0003714">
    <property type="term" value="F:transcription corepressor activity"/>
    <property type="evidence" value="ECO:0000250"/>
    <property type="project" value="UniProtKB"/>
</dbReference>
<dbReference type="GO" id="GO:0140416">
    <property type="term" value="F:transcription regulator inhibitor activity"/>
    <property type="evidence" value="ECO:0000266"/>
    <property type="project" value="RGD"/>
</dbReference>
<dbReference type="GO" id="GO:0031625">
    <property type="term" value="F:ubiquitin protein ligase binding"/>
    <property type="evidence" value="ECO:0000266"/>
    <property type="project" value="RGD"/>
</dbReference>
<dbReference type="GO" id="GO:0051082">
    <property type="term" value="F:unfolded protein binding"/>
    <property type="evidence" value="ECO:0000266"/>
    <property type="project" value="RGD"/>
</dbReference>
<dbReference type="GO" id="GO:0046034">
    <property type="term" value="P:ATP metabolic process"/>
    <property type="evidence" value="ECO:0000266"/>
    <property type="project" value="RGD"/>
</dbReference>
<dbReference type="GO" id="GO:0007339">
    <property type="term" value="P:binding of sperm to zona pellucida"/>
    <property type="evidence" value="ECO:0000266"/>
    <property type="project" value="RGD"/>
</dbReference>
<dbReference type="GO" id="GO:0070370">
    <property type="term" value="P:cellular heat acclimation"/>
    <property type="evidence" value="ECO:0000266"/>
    <property type="project" value="RGD"/>
</dbReference>
<dbReference type="GO" id="GO:0034605">
    <property type="term" value="P:cellular response to heat"/>
    <property type="evidence" value="ECO:0000266"/>
    <property type="project" value="RGD"/>
</dbReference>
<dbReference type="GO" id="GO:0034620">
    <property type="term" value="P:cellular response to unfolded protein"/>
    <property type="evidence" value="ECO:0000266"/>
    <property type="project" value="RGD"/>
</dbReference>
<dbReference type="GO" id="GO:0051085">
    <property type="term" value="P:chaperone cofactor-dependent protein refolding"/>
    <property type="evidence" value="ECO:0000318"/>
    <property type="project" value="GO_Central"/>
</dbReference>
<dbReference type="GO" id="GO:0051131">
    <property type="term" value="P:chaperone-mediated protein complex assembly"/>
    <property type="evidence" value="ECO:0000266"/>
    <property type="project" value="RGD"/>
</dbReference>
<dbReference type="GO" id="GO:0006952">
    <property type="term" value="P:defense response"/>
    <property type="evidence" value="ECO:0000314"/>
    <property type="project" value="RGD"/>
</dbReference>
<dbReference type="GO" id="GO:0007041">
    <property type="term" value="P:lysosomal transport"/>
    <property type="evidence" value="ECO:0000250"/>
    <property type="project" value="UniProtKB"/>
</dbReference>
<dbReference type="GO" id="GO:0006402">
    <property type="term" value="P:mRNA catabolic process"/>
    <property type="evidence" value="ECO:0000250"/>
    <property type="project" value="UniProtKB"/>
</dbReference>
<dbReference type="GO" id="GO:0043066">
    <property type="term" value="P:negative regulation of apoptotic process"/>
    <property type="evidence" value="ECO:0000314"/>
    <property type="project" value="RGD"/>
</dbReference>
<dbReference type="GO" id="GO:0030308">
    <property type="term" value="P:negative regulation of cell growth"/>
    <property type="evidence" value="ECO:0000250"/>
    <property type="project" value="UniProtKB"/>
</dbReference>
<dbReference type="GO" id="GO:0008285">
    <property type="term" value="P:negative regulation of cell population proliferation"/>
    <property type="evidence" value="ECO:0000250"/>
    <property type="project" value="UniProtKB"/>
</dbReference>
<dbReference type="GO" id="GO:1902236">
    <property type="term" value="P:negative regulation of endoplasmic reticulum stress-induced intrinsic apoptotic signaling pathway"/>
    <property type="evidence" value="ECO:0000266"/>
    <property type="project" value="RGD"/>
</dbReference>
<dbReference type="GO" id="GO:2001240">
    <property type="term" value="P:negative regulation of extrinsic apoptotic signaling pathway in absence of ligand"/>
    <property type="evidence" value="ECO:0000266"/>
    <property type="project" value="RGD"/>
</dbReference>
<dbReference type="GO" id="GO:0090084">
    <property type="term" value="P:negative regulation of inclusion body assembly"/>
    <property type="evidence" value="ECO:0000266"/>
    <property type="project" value="RGD"/>
</dbReference>
<dbReference type="GO" id="GO:1901029">
    <property type="term" value="P:negative regulation of mitochondrial outer membrane permeabilization involved in apoptotic signaling pathway"/>
    <property type="evidence" value="ECO:0000266"/>
    <property type="project" value="RGD"/>
</dbReference>
<dbReference type="GO" id="GO:0031397">
    <property type="term" value="P:negative regulation of protein ubiquitination"/>
    <property type="evidence" value="ECO:0000266"/>
    <property type="project" value="RGD"/>
</dbReference>
<dbReference type="GO" id="GO:0090201">
    <property type="term" value="P:negative regulation of release of cytochrome c from mitochondria"/>
    <property type="evidence" value="ECO:0000315"/>
    <property type="project" value="RGD"/>
</dbReference>
<dbReference type="GO" id="GO:0000122">
    <property type="term" value="P:negative regulation of transcription by RNA polymerase II"/>
    <property type="evidence" value="ECO:0000250"/>
    <property type="project" value="UniProtKB"/>
</dbReference>
<dbReference type="GO" id="GO:0030512">
    <property type="term" value="P:negative regulation of transforming growth factor beta receptor signaling pathway"/>
    <property type="evidence" value="ECO:0000266"/>
    <property type="project" value="RGD"/>
</dbReference>
<dbReference type="GO" id="GO:0045906">
    <property type="term" value="P:negative regulation of vasoconstriction"/>
    <property type="evidence" value="ECO:0000315"/>
    <property type="project" value="RGD"/>
</dbReference>
<dbReference type="GO" id="GO:0045648">
    <property type="term" value="P:positive regulation of erythrocyte differentiation"/>
    <property type="evidence" value="ECO:0000266"/>
    <property type="project" value="RGD"/>
</dbReference>
<dbReference type="GO" id="GO:0010628">
    <property type="term" value="P:positive regulation of gene expression"/>
    <property type="evidence" value="ECO:0000266"/>
    <property type="project" value="RGD"/>
</dbReference>
<dbReference type="GO" id="GO:0032757">
    <property type="term" value="P:positive regulation of interleukin-8 production"/>
    <property type="evidence" value="ECO:0000266"/>
    <property type="project" value="RGD"/>
</dbReference>
<dbReference type="GO" id="GO:0090063">
    <property type="term" value="P:positive regulation of microtubule nucleation"/>
    <property type="evidence" value="ECO:0000250"/>
    <property type="project" value="UniProtKB"/>
</dbReference>
<dbReference type="GO" id="GO:0070434">
    <property type="term" value="P:positive regulation of nucleotide-binding oligomerization domain containing 2 signaling pathway"/>
    <property type="evidence" value="ECO:0000266"/>
    <property type="project" value="RGD"/>
</dbReference>
<dbReference type="GO" id="GO:0032436">
    <property type="term" value="P:positive regulation of proteasomal ubiquitin-dependent protein catabolic process"/>
    <property type="evidence" value="ECO:0000266"/>
    <property type="project" value="RGD"/>
</dbReference>
<dbReference type="GO" id="GO:0033120">
    <property type="term" value="P:positive regulation of RNA splicing"/>
    <property type="evidence" value="ECO:0000266"/>
    <property type="project" value="RGD"/>
</dbReference>
<dbReference type="GO" id="GO:0001916">
    <property type="term" value="P:positive regulation of T cell mediated cytotoxicity"/>
    <property type="evidence" value="ECO:0000314"/>
    <property type="project" value="RGD"/>
</dbReference>
<dbReference type="GO" id="GO:1903265">
    <property type="term" value="P:positive regulation of tumor necrosis factor-mediated signaling pathway"/>
    <property type="evidence" value="ECO:0000266"/>
    <property type="project" value="RGD"/>
</dbReference>
<dbReference type="GO" id="GO:0006457">
    <property type="term" value="P:protein folding"/>
    <property type="evidence" value="ECO:0000266"/>
    <property type="project" value="RGD"/>
</dbReference>
<dbReference type="GO" id="GO:0042026">
    <property type="term" value="P:protein refolding"/>
    <property type="evidence" value="ECO:0000250"/>
    <property type="project" value="UniProtKB"/>
</dbReference>
<dbReference type="GO" id="GO:0050821">
    <property type="term" value="P:protein stabilization"/>
    <property type="evidence" value="ECO:0000266"/>
    <property type="project" value="RGD"/>
</dbReference>
<dbReference type="GO" id="GO:1901673">
    <property type="term" value="P:regulation of mitotic spindle assembly"/>
    <property type="evidence" value="ECO:0000250"/>
    <property type="project" value="UniProtKB"/>
</dbReference>
<dbReference type="GO" id="GO:0031396">
    <property type="term" value="P:regulation of protein ubiquitination"/>
    <property type="evidence" value="ECO:0000266"/>
    <property type="project" value="RGD"/>
</dbReference>
<dbReference type="GO" id="GO:0009408">
    <property type="term" value="P:response to heat"/>
    <property type="evidence" value="ECO:0000266"/>
    <property type="project" value="RGD"/>
</dbReference>
<dbReference type="GO" id="GO:0006986">
    <property type="term" value="P:response to unfolded protein"/>
    <property type="evidence" value="ECO:0000315"/>
    <property type="project" value="RGD"/>
</dbReference>
<dbReference type="CDD" id="cd10233">
    <property type="entry name" value="ASKHA_NBD_HSP70_HSPA1"/>
    <property type="match status" value="1"/>
</dbReference>
<dbReference type="FunFam" id="2.60.34.10:FF:000002">
    <property type="entry name" value="Heat shock 70 kDa"/>
    <property type="match status" value="1"/>
</dbReference>
<dbReference type="FunFam" id="3.30.420.40:FF:000172">
    <property type="entry name" value="Heat shock 70 kDa protein"/>
    <property type="match status" value="1"/>
</dbReference>
<dbReference type="FunFam" id="3.30.30.30:FF:000001">
    <property type="entry name" value="heat shock 70 kDa protein-like"/>
    <property type="match status" value="1"/>
</dbReference>
<dbReference type="FunFam" id="3.30.420.40:FF:000028">
    <property type="entry name" value="heat shock 70 kDa protein-like"/>
    <property type="match status" value="1"/>
</dbReference>
<dbReference type="FunFam" id="3.30.420.40:FF:000135">
    <property type="entry name" value="Heat shock cognate 71 kDa protein"/>
    <property type="match status" value="1"/>
</dbReference>
<dbReference type="FunFam" id="3.90.640.10:FF:000134">
    <property type="entry name" value="Heat shock cognate 71 kDa protein"/>
    <property type="match status" value="1"/>
</dbReference>
<dbReference type="FunFam" id="1.20.1270.10:FF:000003">
    <property type="entry name" value="heat shock cognate 71 kDa protein-like"/>
    <property type="match status" value="1"/>
</dbReference>
<dbReference type="FunFam" id="3.30.420.40:FF:000026">
    <property type="entry name" value="Heat shock protein 70"/>
    <property type="match status" value="1"/>
</dbReference>
<dbReference type="Gene3D" id="1.20.1270.10">
    <property type="match status" value="1"/>
</dbReference>
<dbReference type="Gene3D" id="3.30.30.30">
    <property type="match status" value="1"/>
</dbReference>
<dbReference type="Gene3D" id="3.30.420.40">
    <property type="match status" value="2"/>
</dbReference>
<dbReference type="Gene3D" id="3.90.640.10">
    <property type="entry name" value="Actin, Chain A, domain 4"/>
    <property type="match status" value="1"/>
</dbReference>
<dbReference type="Gene3D" id="2.60.34.10">
    <property type="entry name" value="Substrate Binding Domain Of DNAk, Chain A, domain 1"/>
    <property type="match status" value="1"/>
</dbReference>
<dbReference type="InterPro" id="IPR043129">
    <property type="entry name" value="ATPase_NBD"/>
</dbReference>
<dbReference type="InterPro" id="IPR018181">
    <property type="entry name" value="Heat_shock_70_CS"/>
</dbReference>
<dbReference type="InterPro" id="IPR029048">
    <property type="entry name" value="HSP70_C_sf"/>
</dbReference>
<dbReference type="InterPro" id="IPR029047">
    <property type="entry name" value="HSP70_peptide-bd_sf"/>
</dbReference>
<dbReference type="InterPro" id="IPR013126">
    <property type="entry name" value="Hsp_70_fam"/>
</dbReference>
<dbReference type="NCBIfam" id="NF001413">
    <property type="entry name" value="PRK00290.1"/>
    <property type="match status" value="1"/>
</dbReference>
<dbReference type="PANTHER" id="PTHR19375">
    <property type="entry name" value="HEAT SHOCK PROTEIN 70KDA"/>
    <property type="match status" value="1"/>
</dbReference>
<dbReference type="Pfam" id="PF00012">
    <property type="entry name" value="HSP70"/>
    <property type="match status" value="1"/>
</dbReference>
<dbReference type="PRINTS" id="PR00301">
    <property type="entry name" value="HEATSHOCK70"/>
</dbReference>
<dbReference type="SUPFAM" id="SSF53067">
    <property type="entry name" value="Actin-like ATPase domain"/>
    <property type="match status" value="2"/>
</dbReference>
<dbReference type="SUPFAM" id="SSF100934">
    <property type="entry name" value="Heat shock protein 70kD (HSP70), C-terminal subdomain"/>
    <property type="match status" value="1"/>
</dbReference>
<dbReference type="SUPFAM" id="SSF100920">
    <property type="entry name" value="Heat shock protein 70kD (HSP70), peptide-binding domain"/>
    <property type="match status" value="1"/>
</dbReference>
<dbReference type="PROSITE" id="PS00297">
    <property type="entry name" value="HSP70_1"/>
    <property type="match status" value="1"/>
</dbReference>
<dbReference type="PROSITE" id="PS00329">
    <property type="entry name" value="HSP70_2"/>
    <property type="match status" value="1"/>
</dbReference>
<dbReference type="PROSITE" id="PS01036">
    <property type="entry name" value="HSP70_3"/>
    <property type="match status" value="1"/>
</dbReference>
<reference key="1">
    <citation type="journal article" date="1994" name="Immunogenetics">
        <title>Comparative analysis of the three major histocompatibility complex-linked heat shock protein 70 (Hsp70) genes of the rat.</title>
        <authorList>
            <person name="Walter L."/>
            <person name="Rauh F."/>
            <person name="Guenther E."/>
        </authorList>
    </citation>
    <scope>NUCLEOTIDE SEQUENCE [GENOMIC DNA]</scope>
    <source>
        <strain>LEW.1W/GUN</strain>
    </source>
</reference>
<reference key="2">
    <citation type="journal article" date="2004" name="Genome Res.">
        <title>The genomic sequence and comparative analysis of the rat major histocompatibility complex.</title>
        <authorList>
            <person name="Hurt P."/>
            <person name="Walter L."/>
            <person name="Sudbrak R."/>
            <person name="Klages S."/>
            <person name="Mueller I."/>
            <person name="Shiina T."/>
            <person name="Inoko H."/>
            <person name="Lehrach H."/>
            <person name="Guenther E."/>
            <person name="Reinhardt R."/>
            <person name="Himmelbauer H."/>
        </authorList>
    </citation>
    <scope>NUCLEOTIDE SEQUENCE [LARGE SCALE GENOMIC DNA]</scope>
    <source>
        <strain>Brown Norway</strain>
    </source>
</reference>
<reference key="3">
    <citation type="journal article" date="2009" name="Mol. Cell. Biol.">
        <title>CHIP represses myocardin-induced smooth muscle cell differentiation via ubiquitin-mediated proteasomal degradation.</title>
        <authorList>
            <person name="Xie P."/>
            <person name="Fan Y."/>
            <person name="Zhang H."/>
            <person name="Zhang Y."/>
            <person name="She M."/>
            <person name="Gu D."/>
            <person name="Patterson C."/>
            <person name="Li H."/>
        </authorList>
    </citation>
    <scope>INTERACTION WITH STUB1</scope>
</reference>
<reference key="4">
    <citation type="journal article" date="2018" name="J. Neurosci.">
        <title>Neuronal Preconditioning Requires the Mitophagic Activity of C-terminus of HSC70-Interacting Protein.</title>
        <authorList>
            <person name="Lizama B.N."/>
            <person name="Palubinsky A.M."/>
            <person name="Raveendran V.A."/>
            <person name="Moore A.M."/>
            <person name="Federspiel J.D."/>
            <person name="Codreanu S.G."/>
            <person name="Liebler D.C."/>
            <person name="McLaughlin B."/>
        </authorList>
    </citation>
    <scope>DEVELOPMENTAL STAGE</scope>
    <scope>INDUCTION BY OXYGEN AND GLUCOSE DEPRIVATION</scope>
</reference>
<reference key="5">
    <citation type="journal article" date="2019" name="J. Cell. Physiol.">
        <title>CHIP attenuates lipopolysaccharide-induced cardiac hypertrophy and apoptosis by promoting NFATc3 proteasomal degradation.</title>
        <authorList>
            <person name="Chao C.N."/>
            <person name="Lai C.H."/>
            <person name="Badrealam K.F."/>
            <person name="Lo J.F."/>
            <person name="Shen C.Y."/>
            <person name="Chen C.H."/>
            <person name="Chen R.J."/>
            <person name="Viswanadha V.P."/>
            <person name="Kuo W.W."/>
            <person name="Huang C.Y."/>
        </authorList>
    </citation>
    <scope>FUNCTION</scope>
</reference>
<sequence length="641" mass="70185">MAKKTAIGIDLGTTYSCVGVFQHGKVEIIANDQGNRTTPSYVAFTDTERLIGDAAKNQVALNPQNTVFDAKRLIGRKFGDPVVQSDMKHWPFQVVNDGDKPKVQVNYKGENRSFYPEEISSMVLTKMKEIAEAYLGHPVTNAVITVPAYFNDSQRQATKDAGVIAGLNVLRIINEPTAAAIAYGLDRTGKGERNVLIFDLGGGTFDVSILTIDDGIFEVKATAGDTHLGGEDFDNRLVSHFVEEFKRKHKKDISQNKRAVRRLRTACERAKRTLSSSTQASLEIDSLFEGIDFYTSITRARFEELCSDLFRGTLEPVEKALRDAKLDKAQIHDLVLVGGSTRIPKVQKLLQDFFNGRDLNKSINPDEAVAYGAAVQAAILMGDKSENVQDLLLLDVAPLSLGLETAGGVMTALIKRNSTIPTKQTQTFTTYSDNQPGVLIQVYEGERAMTRDNNLLGRFELSGIPPAPRGVPQIEVTFDIDANGILNVTATDKSTGKANKITITNDKGRLSKEEIERMVQEAERYKAEDEVQRERVAAKNALESYAFNMKSAVEDEGLKGKISEADKKKVLDKCQEVISWLDSNTLAEKEEFVHKREELERVCNPIISGLYQGAGAPGAGGFGAQAPKGGSGSGPTIEEVD</sequence>
<protein>
    <recommendedName>
        <fullName>Heat shock 70 kDa protein 1A</fullName>
    </recommendedName>
    <alternativeName>
        <fullName>Heat shock 70 kDa protein 2</fullName>
        <shortName>HSP70-2</shortName>
        <shortName>HSP70.2</shortName>
    </alternativeName>
</protein>